<evidence type="ECO:0000255" key="1">
    <source>
        <dbReference type="HAMAP-Rule" id="MF_00023"/>
    </source>
</evidence>
<evidence type="ECO:0000305" key="2"/>
<feature type="chain" id="PRO_0000102941" description="SsrA-binding protein">
    <location>
        <begin position="1"/>
        <end position="143"/>
    </location>
</feature>
<dbReference type="EMBL" id="AE000513">
    <property type="protein sequence ID" value="AAF11033.1"/>
    <property type="status" value="ALT_INIT"/>
    <property type="molecule type" value="Genomic_DNA"/>
</dbReference>
<dbReference type="PIR" id="D75392">
    <property type="entry name" value="D75392"/>
</dbReference>
<dbReference type="RefSeq" id="NP_295191.1">
    <property type="nucleotide sequence ID" value="NC_001263.1"/>
</dbReference>
<dbReference type="RefSeq" id="WP_027480230.1">
    <property type="nucleotide sequence ID" value="NC_001263.1"/>
</dbReference>
<dbReference type="SMR" id="Q9RUC1"/>
<dbReference type="FunCoup" id="Q9RUC1">
    <property type="interactions" value="301"/>
</dbReference>
<dbReference type="STRING" id="243230.DR_1468"/>
<dbReference type="PaxDb" id="243230-DR_1468"/>
<dbReference type="EnsemblBacteria" id="AAF11033">
    <property type="protein sequence ID" value="AAF11033"/>
    <property type="gene ID" value="DR_1468"/>
</dbReference>
<dbReference type="GeneID" id="69517706"/>
<dbReference type="KEGG" id="dra:DR_1468"/>
<dbReference type="PATRIC" id="fig|243230.17.peg.1667"/>
<dbReference type="eggNOG" id="COG0691">
    <property type="taxonomic scope" value="Bacteria"/>
</dbReference>
<dbReference type="HOGENOM" id="CLU_108953_0_1_0"/>
<dbReference type="InParanoid" id="Q9RUC1"/>
<dbReference type="OrthoDB" id="9805462at2"/>
<dbReference type="Proteomes" id="UP000002524">
    <property type="component" value="Chromosome 1"/>
</dbReference>
<dbReference type="GO" id="GO:0005829">
    <property type="term" value="C:cytosol"/>
    <property type="evidence" value="ECO:0000318"/>
    <property type="project" value="GO_Central"/>
</dbReference>
<dbReference type="GO" id="GO:0003723">
    <property type="term" value="F:RNA binding"/>
    <property type="evidence" value="ECO:0000318"/>
    <property type="project" value="GO_Central"/>
</dbReference>
<dbReference type="GO" id="GO:0070929">
    <property type="term" value="P:trans-translation"/>
    <property type="evidence" value="ECO:0007669"/>
    <property type="project" value="UniProtKB-UniRule"/>
</dbReference>
<dbReference type="CDD" id="cd09294">
    <property type="entry name" value="SmpB"/>
    <property type="match status" value="1"/>
</dbReference>
<dbReference type="Gene3D" id="2.40.280.10">
    <property type="match status" value="1"/>
</dbReference>
<dbReference type="HAMAP" id="MF_00023">
    <property type="entry name" value="SmpB"/>
    <property type="match status" value="1"/>
</dbReference>
<dbReference type="InterPro" id="IPR023620">
    <property type="entry name" value="SmpB"/>
</dbReference>
<dbReference type="InterPro" id="IPR000037">
    <property type="entry name" value="SsrA-bd_prot"/>
</dbReference>
<dbReference type="InterPro" id="IPR020081">
    <property type="entry name" value="SsrA-bd_prot_CS"/>
</dbReference>
<dbReference type="NCBIfam" id="NF003843">
    <property type="entry name" value="PRK05422.1"/>
    <property type="match status" value="1"/>
</dbReference>
<dbReference type="NCBIfam" id="TIGR00086">
    <property type="entry name" value="smpB"/>
    <property type="match status" value="1"/>
</dbReference>
<dbReference type="PANTHER" id="PTHR30308:SF2">
    <property type="entry name" value="SSRA-BINDING PROTEIN"/>
    <property type="match status" value="1"/>
</dbReference>
<dbReference type="PANTHER" id="PTHR30308">
    <property type="entry name" value="TMRNA-BINDING COMPONENT OF TRANS-TRANSLATION TAGGING COMPLEX"/>
    <property type="match status" value="1"/>
</dbReference>
<dbReference type="Pfam" id="PF01668">
    <property type="entry name" value="SmpB"/>
    <property type="match status" value="1"/>
</dbReference>
<dbReference type="SUPFAM" id="SSF74982">
    <property type="entry name" value="Small protein B (SmpB)"/>
    <property type="match status" value="1"/>
</dbReference>
<dbReference type="PROSITE" id="PS01317">
    <property type="entry name" value="SSRP"/>
    <property type="match status" value="1"/>
</dbReference>
<keyword id="KW-0963">Cytoplasm</keyword>
<keyword id="KW-1185">Reference proteome</keyword>
<keyword id="KW-0694">RNA-binding</keyword>
<sequence>MRRVYTNRRAHHEYELLERFEAGISLTGSEVKSVRAGGVDFRDAFARINGSDVDLEGLYIPVYKEATYNNHEPRRKRRLLLHREEIEKLRRGLEQKGLTLVPTRLYQKGRYFKVELALARGKKLHDKRRADAERTVARELREL</sequence>
<protein>
    <recommendedName>
        <fullName evidence="1">SsrA-binding protein</fullName>
    </recommendedName>
    <alternativeName>
        <fullName evidence="1">Small protein B</fullName>
    </alternativeName>
</protein>
<comment type="function">
    <text evidence="1">Required for rescue of stalled ribosomes mediated by trans-translation. Binds to transfer-messenger RNA (tmRNA), required for stable association of tmRNA with ribosomes. tmRNA and SmpB together mimic tRNA shape, replacing the anticodon stem-loop with SmpB. tmRNA is encoded by the ssrA gene; the 2 termini fold to resemble tRNA(Ala) and it encodes a 'tag peptide', a short internal open reading frame. During trans-translation Ala-aminoacylated tmRNA acts like a tRNA, entering the A-site of stalled ribosomes, displacing the stalled mRNA. The ribosome then switches to translate the ORF on the tmRNA; the nascent peptide is terminated with the 'tag peptide' encoded by the tmRNA and targeted for degradation. The ribosome is freed to recommence translation, which seems to be the essential function of trans-translation.</text>
</comment>
<comment type="subcellular location">
    <subcellularLocation>
        <location evidence="1">Cytoplasm</location>
    </subcellularLocation>
    <text evidence="1">The tmRNA-SmpB complex associates with stalled 70S ribosomes.</text>
</comment>
<comment type="similarity">
    <text evidence="1">Belongs to the SmpB family.</text>
</comment>
<comment type="sequence caution" evidence="2">
    <conflict type="erroneous initiation">
        <sequence resource="EMBL-CDS" id="AAF11033"/>
    </conflict>
    <text>Extended N-terminus.</text>
</comment>
<reference key="1">
    <citation type="journal article" date="1999" name="Science">
        <title>Genome sequence of the radioresistant bacterium Deinococcus radiodurans R1.</title>
        <authorList>
            <person name="White O."/>
            <person name="Eisen J.A."/>
            <person name="Heidelberg J.F."/>
            <person name="Hickey E.K."/>
            <person name="Peterson J.D."/>
            <person name="Dodson R.J."/>
            <person name="Haft D.H."/>
            <person name="Gwinn M.L."/>
            <person name="Nelson W.C."/>
            <person name="Richardson D.L."/>
            <person name="Moffat K.S."/>
            <person name="Qin H."/>
            <person name="Jiang L."/>
            <person name="Pamphile W."/>
            <person name="Crosby M."/>
            <person name="Shen M."/>
            <person name="Vamathevan J.J."/>
            <person name="Lam P."/>
            <person name="McDonald L.A."/>
            <person name="Utterback T.R."/>
            <person name="Zalewski C."/>
            <person name="Makarova K.S."/>
            <person name="Aravind L."/>
            <person name="Daly M.J."/>
            <person name="Minton K.W."/>
            <person name="Fleischmann R.D."/>
            <person name="Ketchum K.A."/>
            <person name="Nelson K.E."/>
            <person name="Salzberg S.L."/>
            <person name="Smith H.O."/>
            <person name="Venter J.C."/>
            <person name="Fraser C.M."/>
        </authorList>
    </citation>
    <scope>NUCLEOTIDE SEQUENCE [LARGE SCALE GENOMIC DNA]</scope>
    <source>
        <strain>ATCC 13939 / DSM 20539 / JCM 16871 / CCUG 27074 / LMG 4051 / NBRC 15346 / NCIMB 9279 / VKM B-1422 / R1</strain>
    </source>
</reference>
<organism>
    <name type="scientific">Deinococcus radiodurans (strain ATCC 13939 / DSM 20539 / JCM 16871 / CCUG 27074 / LMG 4051 / NBRC 15346 / NCIMB 9279 / VKM B-1422 / R1)</name>
    <dbReference type="NCBI Taxonomy" id="243230"/>
    <lineage>
        <taxon>Bacteria</taxon>
        <taxon>Thermotogati</taxon>
        <taxon>Deinococcota</taxon>
        <taxon>Deinococci</taxon>
        <taxon>Deinococcales</taxon>
        <taxon>Deinococcaceae</taxon>
        <taxon>Deinococcus</taxon>
    </lineage>
</organism>
<proteinExistence type="inferred from homology"/>
<gene>
    <name evidence="1" type="primary">smpB</name>
    <name type="ordered locus">DR_1468</name>
</gene>
<accession>Q9RUC1</accession>
<name>SSRP_DEIRA</name>